<keyword id="KW-0143">Chaperone</keyword>
<keyword id="KW-0963">Cytoplasm</keyword>
<keyword id="KW-0346">Stress response</keyword>
<evidence type="ECO:0000255" key="1">
    <source>
        <dbReference type="HAMAP-Rule" id="MF_01151"/>
    </source>
</evidence>
<evidence type="ECO:0000256" key="2">
    <source>
        <dbReference type="SAM" id="MobiDB-lite"/>
    </source>
</evidence>
<reference key="1">
    <citation type="submission" date="2008-10" db="EMBL/GenBank/DDBJ databases">
        <title>Genome sequence of Bacillus cereus AH820.</title>
        <authorList>
            <person name="Dodson R.J."/>
            <person name="Durkin A.S."/>
            <person name="Rosovitz M.J."/>
            <person name="Rasko D.A."/>
            <person name="Hoffmaster A."/>
            <person name="Ravel J."/>
            <person name="Sutton G."/>
        </authorList>
    </citation>
    <scope>NUCLEOTIDE SEQUENCE [LARGE SCALE GENOMIC DNA]</scope>
    <source>
        <strain>AH820</strain>
    </source>
</reference>
<dbReference type="EMBL" id="CP001283">
    <property type="protein sequence ID" value="ACK89761.1"/>
    <property type="molecule type" value="Genomic_DNA"/>
</dbReference>
<dbReference type="RefSeq" id="WP_000392710.1">
    <property type="nucleotide sequence ID" value="NC_011773.1"/>
</dbReference>
<dbReference type="SMR" id="B7JN40"/>
<dbReference type="GeneID" id="72450997"/>
<dbReference type="KEGG" id="bcu:BCAH820_4337"/>
<dbReference type="HOGENOM" id="CLU_057217_5_2_9"/>
<dbReference type="Proteomes" id="UP000001363">
    <property type="component" value="Chromosome"/>
</dbReference>
<dbReference type="GO" id="GO:0005737">
    <property type="term" value="C:cytoplasm"/>
    <property type="evidence" value="ECO:0007669"/>
    <property type="project" value="UniProtKB-SubCell"/>
</dbReference>
<dbReference type="GO" id="GO:0000774">
    <property type="term" value="F:adenyl-nucleotide exchange factor activity"/>
    <property type="evidence" value="ECO:0007669"/>
    <property type="project" value="InterPro"/>
</dbReference>
<dbReference type="GO" id="GO:0042803">
    <property type="term" value="F:protein homodimerization activity"/>
    <property type="evidence" value="ECO:0007669"/>
    <property type="project" value="InterPro"/>
</dbReference>
<dbReference type="GO" id="GO:0051087">
    <property type="term" value="F:protein-folding chaperone binding"/>
    <property type="evidence" value="ECO:0007669"/>
    <property type="project" value="InterPro"/>
</dbReference>
<dbReference type="GO" id="GO:0051082">
    <property type="term" value="F:unfolded protein binding"/>
    <property type="evidence" value="ECO:0007669"/>
    <property type="project" value="TreeGrafter"/>
</dbReference>
<dbReference type="GO" id="GO:0006457">
    <property type="term" value="P:protein folding"/>
    <property type="evidence" value="ECO:0007669"/>
    <property type="project" value="InterPro"/>
</dbReference>
<dbReference type="CDD" id="cd00446">
    <property type="entry name" value="GrpE"/>
    <property type="match status" value="1"/>
</dbReference>
<dbReference type="FunFam" id="2.30.22.10:FF:000001">
    <property type="entry name" value="Protein GrpE"/>
    <property type="match status" value="1"/>
</dbReference>
<dbReference type="FunFam" id="3.90.20.20:FF:000002">
    <property type="entry name" value="Protein GrpE"/>
    <property type="match status" value="1"/>
</dbReference>
<dbReference type="Gene3D" id="3.90.20.20">
    <property type="match status" value="1"/>
</dbReference>
<dbReference type="Gene3D" id="2.30.22.10">
    <property type="entry name" value="Head domain of nucleotide exchange factor GrpE"/>
    <property type="match status" value="1"/>
</dbReference>
<dbReference type="HAMAP" id="MF_01151">
    <property type="entry name" value="GrpE"/>
    <property type="match status" value="1"/>
</dbReference>
<dbReference type="InterPro" id="IPR000740">
    <property type="entry name" value="GrpE"/>
</dbReference>
<dbReference type="InterPro" id="IPR013805">
    <property type="entry name" value="GrpE_coiled_coil"/>
</dbReference>
<dbReference type="InterPro" id="IPR009012">
    <property type="entry name" value="GrpE_head"/>
</dbReference>
<dbReference type="NCBIfam" id="NF010738">
    <property type="entry name" value="PRK14140.1"/>
    <property type="match status" value="1"/>
</dbReference>
<dbReference type="PANTHER" id="PTHR21237">
    <property type="entry name" value="GRPE PROTEIN"/>
    <property type="match status" value="1"/>
</dbReference>
<dbReference type="PANTHER" id="PTHR21237:SF23">
    <property type="entry name" value="GRPE PROTEIN HOMOLOG, MITOCHONDRIAL"/>
    <property type="match status" value="1"/>
</dbReference>
<dbReference type="Pfam" id="PF01025">
    <property type="entry name" value="GrpE"/>
    <property type="match status" value="1"/>
</dbReference>
<dbReference type="PRINTS" id="PR00773">
    <property type="entry name" value="GRPEPROTEIN"/>
</dbReference>
<dbReference type="SUPFAM" id="SSF58014">
    <property type="entry name" value="Coiled-coil domain of nucleotide exchange factor GrpE"/>
    <property type="match status" value="1"/>
</dbReference>
<dbReference type="SUPFAM" id="SSF51064">
    <property type="entry name" value="Head domain of nucleotide exchange factor GrpE"/>
    <property type="match status" value="1"/>
</dbReference>
<dbReference type="PROSITE" id="PS01071">
    <property type="entry name" value="GRPE"/>
    <property type="match status" value="1"/>
</dbReference>
<protein>
    <recommendedName>
        <fullName evidence="1">Protein GrpE</fullName>
    </recommendedName>
    <alternativeName>
        <fullName evidence="1">HSP-70 cofactor</fullName>
    </alternativeName>
</protein>
<proteinExistence type="inferred from homology"/>
<gene>
    <name evidence="1" type="primary">grpE</name>
    <name type="ordered locus">BCAH820_4337</name>
</gene>
<accession>B7JN40</accession>
<organism>
    <name type="scientific">Bacillus cereus (strain AH820)</name>
    <dbReference type="NCBI Taxonomy" id="405535"/>
    <lineage>
        <taxon>Bacteria</taxon>
        <taxon>Bacillati</taxon>
        <taxon>Bacillota</taxon>
        <taxon>Bacilli</taxon>
        <taxon>Bacillales</taxon>
        <taxon>Bacillaceae</taxon>
        <taxon>Bacillus</taxon>
        <taxon>Bacillus cereus group</taxon>
    </lineage>
</organism>
<sequence>MEERNEQVVEEVKEAQVEEAVTPENSEETVEEKSEAALLQEKVDELQAKLTETEGRTLRLQADFENYKRRVQMDKQAAEKYRAQSLVSDILPALDNFERAMQVEATDEQTKSLLQGMEMVHRQLLEALNKEGVEVIEAVGKQFDPNEHQAIMQVEDSEFESNAVVEEFQKGYKLKDRVIRPSMVKVNQ</sequence>
<feature type="chain" id="PRO_1000137538" description="Protein GrpE">
    <location>
        <begin position="1"/>
        <end position="188"/>
    </location>
</feature>
<feature type="region of interest" description="Disordered" evidence="2">
    <location>
        <begin position="1"/>
        <end position="31"/>
    </location>
</feature>
<feature type="compositionally biased region" description="Basic and acidic residues" evidence="2">
    <location>
        <begin position="1"/>
        <end position="16"/>
    </location>
</feature>
<comment type="function">
    <text evidence="1">Participates actively in the response to hyperosmotic and heat shock by preventing the aggregation of stress-denatured proteins, in association with DnaK and GrpE. It is the nucleotide exchange factor for DnaK and may function as a thermosensor. Unfolded proteins bind initially to DnaJ; upon interaction with the DnaJ-bound protein, DnaK hydrolyzes its bound ATP, resulting in the formation of a stable complex. GrpE releases ADP from DnaK; ATP binding to DnaK triggers the release of the substrate protein, thus completing the reaction cycle. Several rounds of ATP-dependent interactions between DnaJ, DnaK and GrpE are required for fully efficient folding.</text>
</comment>
<comment type="subunit">
    <text evidence="1">Homodimer.</text>
</comment>
<comment type="subcellular location">
    <subcellularLocation>
        <location evidence="1">Cytoplasm</location>
    </subcellularLocation>
</comment>
<comment type="similarity">
    <text evidence="1">Belongs to the GrpE family.</text>
</comment>
<name>GRPE_BACC0</name>